<organism>
    <name type="scientific">Epstein-Barr virus (strain B95-8)</name>
    <name type="common">HHV-4</name>
    <name type="synonym">Human herpesvirus 4</name>
    <dbReference type="NCBI Taxonomy" id="10377"/>
    <lineage>
        <taxon>Viruses</taxon>
        <taxon>Duplodnaviria</taxon>
        <taxon>Heunggongvirae</taxon>
        <taxon>Peploviricota</taxon>
        <taxon>Herviviricetes</taxon>
        <taxon>Herpesvirales</taxon>
        <taxon>Orthoherpesviridae</taxon>
        <taxon>Gammaherpesvirinae</taxon>
        <taxon>Lymphocryptovirus</taxon>
        <taxon>Lymphocryptovirus humangamma4</taxon>
        <taxon>Epstein-Barr virus (strain GD1)</taxon>
    </lineage>
</organism>
<feature type="chain" id="PRO_0000046505" description="DNA polymerase catalytic subunit">
    <location>
        <begin position="1"/>
        <end position="1015"/>
    </location>
</feature>
<sequence>MSGGLFYNPFLRPNKGLLKKPDKEYLRLIPKCFQTPGAAGVVDVRGPQPPLCFYQDSLTVVGGDEDGKGMWWRQRAQEGTARPEADTHGSPLDFHVYDILETVYTHEKCAVIPSDKQGYVVPCGIVIKLLGRRKADGASVCVNVFGQQAYFYASAPQGLDVEFAVLSALKASTFDRRTPCRVSVEKVTRRSIMGYGNHAGDYHKITLSHPNSVCHVATWLQDKHGCRIFEANVDATRRFVLDNDFVTFGWYSCRRAIPRLQHRDSYAELEYDCEVGDLSVRREDSSWPSYQALAFDIECLGEEGFPTATNEADLILQISCVLWSTGEEAGRYRRILLTLGTCEDIEGVEVYEFPSELDMLYAFFQLIRDLSVEIVTGYNVANFDWPYILDRARHIYSINPASLGKIRAGGVCEVRRPHDAGKGFLRANTKVRITGLIPIDMYAVCRDKLSLSDYKLDTVARHLLGAKKEDVHYKEIPRLFAAGPEGRRRLGMYCVQDSALVMDLLNHFVIHVEVAEIAKIAHIPCRRVLDDGQQIRVFSCLLAAAQKENFILPMPSASDRDGYQGATVIQPLSGFYNSPVLVVDFASLYPSIIQAHNLCYSTMITPGEEHRLAGLRPGEDYESFRLTGGVYHFVKKHVHESFLASLLTSWLAKRKAIKKLLAACEDPRQRTILDKQQLAIKCTCNAVYGFTGVANGLFPCLSIAETVTLQGRTMLERAKAFVEALSPANLQALAPSPDAWAPLNPEGQLRVIYGDTDSLFIECRGFSESETLRFADALAAHTTRSLFVAPISLEAEKTFSCLMLITKKRYVGVLTDGKTLMKGVELVRKTACKFVQTRCRRVLDLVLADARVKEAASLLSHRPFQESFTQGLPVGFLPVIDILNQAYTDLREGRVPMGELCFSTELSRKLSAYKSTQMPHLAVYQKFVERNEELPQIHDRIQYVFVEPKGGVKGARKTEMAEDPAYAERHGVPVAVDHYFDKLLQGAANILQCLFDNNSGAALSVLQNFTARPPF</sequence>
<dbReference type="EC" id="2.7.7.7"/>
<dbReference type="EMBL" id="V01555">
    <property type="protein sequence ID" value="CAA24805.1"/>
    <property type="molecule type" value="Genomic_DNA"/>
</dbReference>
<dbReference type="EMBL" id="AJ507799">
    <property type="protein sequence ID" value="CAD53462.1"/>
    <property type="molecule type" value="Genomic_DNA"/>
</dbReference>
<dbReference type="PIR" id="A00713">
    <property type="entry name" value="DJBE2L"/>
</dbReference>
<dbReference type="RefSeq" id="YP_401712.1">
    <property type="nucleotide sequence ID" value="NC_007605.1"/>
</dbReference>
<dbReference type="PDB" id="1H15">
    <property type="method" value="X-ray"/>
    <property type="resolution" value="3.10 A"/>
    <property type="chains" value="C/F=628-641"/>
</dbReference>
<dbReference type="PDBsum" id="1H15"/>
<dbReference type="SMR" id="P03198"/>
<dbReference type="BioGRID" id="971723">
    <property type="interactions" value="3"/>
</dbReference>
<dbReference type="DNASU" id="3783681"/>
<dbReference type="GeneID" id="3783681"/>
<dbReference type="KEGG" id="vg:3783681"/>
<dbReference type="EvolutionaryTrace" id="P03198"/>
<dbReference type="Proteomes" id="UP000153037">
    <property type="component" value="Segment"/>
</dbReference>
<dbReference type="GO" id="GO:0042025">
    <property type="term" value="C:host cell nucleus"/>
    <property type="evidence" value="ECO:0000314"/>
    <property type="project" value="UniProtKB"/>
</dbReference>
<dbReference type="GO" id="GO:0008296">
    <property type="term" value="F:3'-5'-DNA exonuclease activity"/>
    <property type="evidence" value="ECO:0007669"/>
    <property type="project" value="TreeGrafter"/>
</dbReference>
<dbReference type="GO" id="GO:0003677">
    <property type="term" value="F:DNA binding"/>
    <property type="evidence" value="ECO:0007669"/>
    <property type="project" value="UniProtKB-KW"/>
</dbReference>
<dbReference type="GO" id="GO:0003887">
    <property type="term" value="F:DNA-directed DNA polymerase activity"/>
    <property type="evidence" value="ECO:0007669"/>
    <property type="project" value="UniProtKB-KW"/>
</dbReference>
<dbReference type="GO" id="GO:0004527">
    <property type="term" value="F:exonuclease activity"/>
    <property type="evidence" value="ECO:0000314"/>
    <property type="project" value="UniProtKB"/>
</dbReference>
<dbReference type="GO" id="GO:0000166">
    <property type="term" value="F:nucleotide binding"/>
    <property type="evidence" value="ECO:0007669"/>
    <property type="project" value="InterPro"/>
</dbReference>
<dbReference type="GO" id="GO:0006287">
    <property type="term" value="P:base-excision repair, gap-filling"/>
    <property type="evidence" value="ECO:0007669"/>
    <property type="project" value="TreeGrafter"/>
</dbReference>
<dbReference type="GO" id="GO:0039686">
    <property type="term" value="P:bidirectional double-stranded viral DNA replication"/>
    <property type="evidence" value="ECO:0000314"/>
    <property type="project" value="UniProtKB"/>
</dbReference>
<dbReference type="GO" id="GO:0045004">
    <property type="term" value="P:DNA replication proofreading"/>
    <property type="evidence" value="ECO:0007669"/>
    <property type="project" value="TreeGrafter"/>
</dbReference>
<dbReference type="GO" id="GO:0006297">
    <property type="term" value="P:nucleotide-excision repair, DNA gap filling"/>
    <property type="evidence" value="ECO:0007669"/>
    <property type="project" value="TreeGrafter"/>
</dbReference>
<dbReference type="FunFam" id="1.10.287.690:FF:000006">
    <property type="entry name" value="DNA polymerase"/>
    <property type="match status" value="1"/>
</dbReference>
<dbReference type="FunFam" id="3.30.420.10:FF:000004">
    <property type="entry name" value="DNA polymerase"/>
    <property type="match status" value="1"/>
</dbReference>
<dbReference type="FunFam" id="1.10.132.60:FF:000011">
    <property type="entry name" value="DNA polymerase catalytic subunit"/>
    <property type="match status" value="1"/>
</dbReference>
<dbReference type="FunFam" id="3.30.342.10:FF:000026">
    <property type="entry name" value="DNA polymerase catalytic subunit"/>
    <property type="match status" value="1"/>
</dbReference>
<dbReference type="Gene3D" id="1.10.132.60">
    <property type="entry name" value="DNA polymerase family B, C-terminal domain"/>
    <property type="match status" value="1"/>
</dbReference>
<dbReference type="Gene3D" id="3.30.342.10">
    <property type="entry name" value="DNA Polymerase, chain B, domain 1"/>
    <property type="match status" value="1"/>
</dbReference>
<dbReference type="Gene3D" id="1.10.287.690">
    <property type="entry name" value="Helix hairpin bin"/>
    <property type="match status" value="1"/>
</dbReference>
<dbReference type="Gene3D" id="3.90.1600.10">
    <property type="entry name" value="Palm domain of DNA polymerase"/>
    <property type="match status" value="1"/>
</dbReference>
<dbReference type="Gene3D" id="3.30.420.10">
    <property type="entry name" value="Ribonuclease H-like superfamily/Ribonuclease H"/>
    <property type="match status" value="1"/>
</dbReference>
<dbReference type="InterPro" id="IPR006172">
    <property type="entry name" value="DNA-dir_DNA_pol_B"/>
</dbReference>
<dbReference type="InterPro" id="IPR017964">
    <property type="entry name" value="DNA-dir_DNA_pol_B_CS"/>
</dbReference>
<dbReference type="InterPro" id="IPR006133">
    <property type="entry name" value="DNA-dir_DNA_pol_B_exonuc"/>
</dbReference>
<dbReference type="InterPro" id="IPR006134">
    <property type="entry name" value="DNA-dir_DNA_pol_B_multi_dom"/>
</dbReference>
<dbReference type="InterPro" id="IPR043502">
    <property type="entry name" value="DNA/RNA_pol_sf"/>
</dbReference>
<dbReference type="InterPro" id="IPR042087">
    <property type="entry name" value="DNA_pol_B_thumb"/>
</dbReference>
<dbReference type="InterPro" id="IPR023211">
    <property type="entry name" value="DNA_pol_palm_dom_sf"/>
</dbReference>
<dbReference type="InterPro" id="IPR050240">
    <property type="entry name" value="DNA_pol_type-B"/>
</dbReference>
<dbReference type="InterPro" id="IPR012337">
    <property type="entry name" value="RNaseH-like_sf"/>
</dbReference>
<dbReference type="InterPro" id="IPR036397">
    <property type="entry name" value="RNaseH_sf"/>
</dbReference>
<dbReference type="PANTHER" id="PTHR10322">
    <property type="entry name" value="DNA POLYMERASE CATALYTIC SUBUNIT"/>
    <property type="match status" value="1"/>
</dbReference>
<dbReference type="PANTHER" id="PTHR10322:SF23">
    <property type="entry name" value="DNA POLYMERASE DELTA CATALYTIC SUBUNIT"/>
    <property type="match status" value="1"/>
</dbReference>
<dbReference type="Pfam" id="PF00136">
    <property type="entry name" value="DNA_pol_B"/>
    <property type="match status" value="1"/>
</dbReference>
<dbReference type="Pfam" id="PF03104">
    <property type="entry name" value="DNA_pol_B_exo1"/>
    <property type="match status" value="1"/>
</dbReference>
<dbReference type="PRINTS" id="PR00106">
    <property type="entry name" value="DNAPOLB"/>
</dbReference>
<dbReference type="SMART" id="SM00486">
    <property type="entry name" value="POLBc"/>
    <property type="match status" value="1"/>
</dbReference>
<dbReference type="SUPFAM" id="SSF56672">
    <property type="entry name" value="DNA/RNA polymerases"/>
    <property type="match status" value="1"/>
</dbReference>
<dbReference type="SUPFAM" id="SSF53098">
    <property type="entry name" value="Ribonuclease H-like"/>
    <property type="match status" value="1"/>
</dbReference>
<dbReference type="PROSITE" id="PS00116">
    <property type="entry name" value="DNA_POLYMERASE_B"/>
    <property type="match status" value="1"/>
</dbReference>
<comment type="function">
    <text>Replicates viral genomic DNA in the late phase of lytic infection, producing long concatemeric DNA. The replication complex is composed of six viral proteins: the DNA polymerase, processivity factor, primase, primase-associated factor, helicase, and ssDNA-binding protein.</text>
</comment>
<comment type="catalytic activity">
    <reaction>
        <text>DNA(n) + a 2'-deoxyribonucleoside 5'-triphosphate = DNA(n+1) + diphosphate</text>
        <dbReference type="Rhea" id="RHEA:22508"/>
        <dbReference type="Rhea" id="RHEA-COMP:17339"/>
        <dbReference type="Rhea" id="RHEA-COMP:17340"/>
        <dbReference type="ChEBI" id="CHEBI:33019"/>
        <dbReference type="ChEBI" id="CHEBI:61560"/>
        <dbReference type="ChEBI" id="CHEBI:173112"/>
        <dbReference type="EC" id="2.7.7.7"/>
    </reaction>
</comment>
<comment type="subunit">
    <text evidence="1 2 4">Forms a complex with the ssDNA-binding protein BALF2, the DNA polymerase processivity factor BMRF1, and the alkaline exonuclease BGLF5. Interacts with the putative helicase-primase complex composed of BBLF4, BSLF1 and BBLF2/3 proteins; these interactions may coordinate leading and lagging strand DNA synthesis at the replication fork.</text>
</comment>
<comment type="subcellular location">
    <subcellularLocation>
        <location evidence="3">Host nucleus</location>
    </subcellularLocation>
    <text>the protein is present at discrete sites in nuclei, called replication compartments where viral DNA replication occurs.</text>
</comment>
<comment type="similarity">
    <text evidence="5">Belongs to the DNA polymerase type-B family.</text>
</comment>
<protein>
    <recommendedName>
        <fullName>DNA polymerase catalytic subunit</fullName>
        <ecNumber>2.7.7.7</ecNumber>
    </recommendedName>
</protein>
<proteinExistence type="evidence at protein level"/>
<reference key="1">
    <citation type="journal article" date="1983" name="Mol. Biol. Med.">
        <title>Sequence analysis of the 17,166 base-pair EcoRI fragment C of B95-8 Epstein-Barr virus.</title>
        <authorList>
            <person name="Bankier A.T."/>
            <person name="Deininger P.L."/>
            <person name="Farrell P.J."/>
            <person name="Barrell B.G."/>
        </authorList>
    </citation>
    <scope>NUCLEOTIDE SEQUENCE [GENOMIC DNA]</scope>
</reference>
<reference key="2">
    <citation type="journal article" date="1984" name="Nature">
        <title>DNA sequence and expression of the B95-8 Epstein-Barr virus genome.</title>
        <authorList>
            <person name="Baer R."/>
            <person name="Bankier A.T."/>
            <person name="Biggin M.D."/>
            <person name="Deininger P.L."/>
            <person name="Farrell P.J."/>
            <person name="Gibson T.J."/>
            <person name="Hatfull G."/>
            <person name="Hudson G.S."/>
            <person name="Satchwell S.C."/>
            <person name="Seguin C."/>
            <person name="Tuffnell P.S."/>
            <person name="Barrell B.G."/>
        </authorList>
    </citation>
    <scope>NUCLEOTIDE SEQUENCE [LARGE SCALE GENOMIC DNA]</scope>
</reference>
<reference key="3">
    <citation type="journal article" date="2003" name="Virology">
        <title>Updated Epstein-Barr virus (EBV) DNA sequence and analysis of a promoter for the BART (CST, BARF0) RNAs of EBV.</title>
        <authorList>
            <person name="de Jesus O."/>
            <person name="Smith P.R."/>
            <person name="Spender L.C."/>
            <person name="Elgueta Karstegl C."/>
            <person name="Niller H.H."/>
            <person name="Huang D."/>
            <person name="Farrell P.J."/>
        </authorList>
    </citation>
    <scope>GENOME REANNOTATION</scope>
</reference>
<reference key="4">
    <citation type="journal article" date="1997" name="Virology">
        <title>A major DNA binding protein encoded by BALF2 open reading frame of Epstein-Barr virus (EBV) forms a complex with other EBV DNA-binding proteins: DNAase, EA-D, and DNA polymerase.</title>
        <authorList>
            <person name="Zeng Y."/>
            <person name="Middeldorp J."/>
            <person name="Madjar J.J."/>
            <person name="Ooka T."/>
        </authorList>
    </citation>
    <scope>INTERACTION WITH BALF2</scope>
    <scope>BMRF1</scope>
    <scope>BGL5</scope>
</reference>
<reference key="5">
    <citation type="journal article" date="2000" name="J. Virol.">
        <title>The Epstein-Barr virus pol catalytic subunit physically interacts with the BBLF4-BSLF1-BBLF2/3 complex.</title>
        <authorList>
            <person name="Fujii K."/>
            <person name="Yokoyama N."/>
            <person name="Kiyono T."/>
            <person name="Kuzushima K."/>
            <person name="Homma M."/>
            <person name="Nishiyama Y."/>
            <person name="Fujita M."/>
            <person name="Tsurumi T."/>
        </authorList>
    </citation>
    <scope>INTERACTION WITH THE PUTATIVE PRIMASE-HELICASE COMPLEX</scope>
</reference>
<reference key="6">
    <citation type="journal article" date="2005" name="J. Virol.">
        <title>Architecture of replication compartments formed during Epstein-Barr virus lytic replication.</title>
        <authorList>
            <person name="Daikoku T."/>
            <person name="Kudoh A."/>
            <person name="Fujita M."/>
            <person name="Sugaya Y."/>
            <person name="Isomura H."/>
            <person name="Shirata N."/>
            <person name="Tsurumi T."/>
        </authorList>
    </citation>
    <scope>SUBCELLULAR LOCATION</scope>
</reference>
<reference key="7">
    <citation type="journal article" date="2002" name="Nat. Immunol.">
        <title>A functional and structural basis for TCR cross-reactivity in multiple sclerosis.</title>
        <authorList>
            <person name="Lang H.L.E."/>
            <person name="Jacobsen H."/>
            <person name="Ikemizu S."/>
            <person name="Andersson C."/>
            <person name="Harlos K."/>
            <person name="Madsen L."/>
            <person name="Hjorth P."/>
            <person name="Sondergaard L."/>
            <person name="Svejgaard A."/>
            <person name="Wucherpfennig K."/>
            <person name="Stuart D.I."/>
            <person name="Bell J.I."/>
            <person name="Jones E.Y."/>
            <person name="Fugger L."/>
        </authorList>
    </citation>
    <scope>X-RAY CRYSTALLOGRAPHY (3.1 ANGSTROMS) OF 628-641 IN COMPLEX WITH HLA-DRA/HLA-DRB5 HETERODIMER</scope>
</reference>
<accession>P03198</accession>
<accession>Q777B1</accession>
<gene>
    <name type="ORF">BALF5</name>
</gene>
<organismHost>
    <name type="scientific">Homo sapiens</name>
    <name type="common">Human</name>
    <dbReference type="NCBI Taxonomy" id="9606"/>
</organismHost>
<evidence type="ECO:0000269" key="1">
    <source>
    </source>
</evidence>
<evidence type="ECO:0000269" key="2">
    <source>
    </source>
</evidence>
<evidence type="ECO:0000269" key="3">
    <source>
    </source>
</evidence>
<evidence type="ECO:0000269" key="4">
    <source>
    </source>
</evidence>
<evidence type="ECO:0000305" key="5"/>
<name>DPOL_EBVB9</name>
<keyword id="KW-0002">3D-structure</keyword>
<keyword id="KW-0235">DNA replication</keyword>
<keyword id="KW-0238">DNA-binding</keyword>
<keyword id="KW-0239">DNA-directed DNA polymerase</keyword>
<keyword id="KW-0244">Early protein</keyword>
<keyword id="KW-1048">Host nucleus</keyword>
<keyword id="KW-0548">Nucleotidyltransferase</keyword>
<keyword id="KW-1185">Reference proteome</keyword>
<keyword id="KW-0808">Transferase</keyword>
<keyword id="KW-1194">Viral DNA replication</keyword>